<reference key="1">
    <citation type="journal article" date="2004" name="Nature">
        <title>Genome sequence of Silicibacter pomeroyi reveals adaptations to the marine environment.</title>
        <authorList>
            <person name="Moran M.A."/>
            <person name="Buchan A."/>
            <person name="Gonzalez J.M."/>
            <person name="Heidelberg J.F."/>
            <person name="Whitman W.B."/>
            <person name="Kiene R.P."/>
            <person name="Henriksen J.R."/>
            <person name="King G.M."/>
            <person name="Belas R."/>
            <person name="Fuqua C."/>
            <person name="Brinkac L.M."/>
            <person name="Lewis M."/>
            <person name="Johri S."/>
            <person name="Weaver B."/>
            <person name="Pai G."/>
            <person name="Eisen J.A."/>
            <person name="Rahe E."/>
            <person name="Sheldon W.M."/>
            <person name="Ye W."/>
            <person name="Miller T.R."/>
            <person name="Carlton J."/>
            <person name="Rasko D.A."/>
            <person name="Paulsen I.T."/>
            <person name="Ren Q."/>
            <person name="Daugherty S.C."/>
            <person name="DeBoy R.T."/>
            <person name="Dodson R.J."/>
            <person name="Durkin A.S."/>
            <person name="Madupu R."/>
            <person name="Nelson W.C."/>
            <person name="Sullivan S.A."/>
            <person name="Rosovitz M.J."/>
            <person name="Haft D.H."/>
            <person name="Selengut J."/>
            <person name="Ward N."/>
        </authorList>
    </citation>
    <scope>NUCLEOTIDE SEQUENCE [LARGE SCALE GENOMIC DNA]</scope>
    <source>
        <strain>ATCC 700808 / DSM 15171 / DSS-3</strain>
    </source>
</reference>
<reference key="2">
    <citation type="journal article" date="2014" name="Stand. Genomic Sci.">
        <title>An updated genome annotation for the model marine bacterium Ruegeria pomeroyi DSS-3.</title>
        <authorList>
            <person name="Rivers A.R."/>
            <person name="Smith C.B."/>
            <person name="Moran M.A."/>
        </authorList>
    </citation>
    <scope>GENOME REANNOTATION</scope>
    <source>
        <strain>ATCC 700808 / DSM 15171 / DSS-3</strain>
    </source>
</reference>
<accession>Q5LWF2</accession>
<gene>
    <name evidence="1" type="primary">rsmG</name>
    <name type="ordered locus">SPO0002</name>
</gene>
<sequence length="204" mass="22643">MMVPDANTLNVSRETFERLKIFADLVHKWNPRINLVSKRSLEDLWTRHIIDSIQVFRNAPKGDLWVDLGSGGGFPGLICAILAAEEKPETQFICVESDQRKSAFLRSAARECGIACQVISERIEHLDPLDADILSARALTDLTGLLGFAERHLKIGGTALFPKGAAWKKELQDAAKQWNFSYDAVTSLTEPQAVLLKITGVTRV</sequence>
<evidence type="ECO:0000255" key="1">
    <source>
        <dbReference type="HAMAP-Rule" id="MF_00074"/>
    </source>
</evidence>
<feature type="chain" id="PRO_0000184327" description="Ribosomal RNA small subunit methyltransferase G">
    <location>
        <begin position="1"/>
        <end position="204"/>
    </location>
</feature>
<feature type="binding site" evidence="1">
    <location>
        <position position="69"/>
    </location>
    <ligand>
        <name>S-adenosyl-L-methionine</name>
        <dbReference type="ChEBI" id="CHEBI:59789"/>
    </ligand>
</feature>
<feature type="binding site" evidence="1">
    <location>
        <position position="74"/>
    </location>
    <ligand>
        <name>S-adenosyl-L-methionine</name>
        <dbReference type="ChEBI" id="CHEBI:59789"/>
    </ligand>
</feature>
<feature type="binding site" evidence="1">
    <location>
        <begin position="123"/>
        <end position="124"/>
    </location>
    <ligand>
        <name>S-adenosyl-L-methionine</name>
        <dbReference type="ChEBI" id="CHEBI:59789"/>
    </ligand>
</feature>
<feature type="binding site" evidence="1">
    <location>
        <position position="137"/>
    </location>
    <ligand>
        <name>S-adenosyl-L-methionine</name>
        <dbReference type="ChEBI" id="CHEBI:59789"/>
    </ligand>
</feature>
<name>RSMG_RUEPO</name>
<protein>
    <recommendedName>
        <fullName evidence="1">Ribosomal RNA small subunit methyltransferase G</fullName>
        <ecNumber evidence="1">2.1.1.170</ecNumber>
    </recommendedName>
    <alternativeName>
        <fullName evidence="1">16S rRNA 7-methylguanosine methyltransferase</fullName>
        <shortName evidence="1">16S rRNA m7G methyltransferase</shortName>
    </alternativeName>
</protein>
<comment type="function">
    <text evidence="1">Specifically methylates the N7 position of guanine in position 527 of 16S rRNA.</text>
</comment>
<comment type="catalytic activity">
    <reaction evidence="1">
        <text>guanosine(527) in 16S rRNA + S-adenosyl-L-methionine = N(7)-methylguanosine(527) in 16S rRNA + S-adenosyl-L-homocysteine</text>
        <dbReference type="Rhea" id="RHEA:42732"/>
        <dbReference type="Rhea" id="RHEA-COMP:10209"/>
        <dbReference type="Rhea" id="RHEA-COMP:10210"/>
        <dbReference type="ChEBI" id="CHEBI:57856"/>
        <dbReference type="ChEBI" id="CHEBI:59789"/>
        <dbReference type="ChEBI" id="CHEBI:74269"/>
        <dbReference type="ChEBI" id="CHEBI:74480"/>
        <dbReference type="EC" id="2.1.1.170"/>
    </reaction>
</comment>
<comment type="subcellular location">
    <subcellularLocation>
        <location evidence="1">Cytoplasm</location>
    </subcellularLocation>
</comment>
<comment type="similarity">
    <text evidence="1">Belongs to the methyltransferase superfamily. RNA methyltransferase RsmG family.</text>
</comment>
<proteinExistence type="inferred from homology"/>
<organism>
    <name type="scientific">Ruegeria pomeroyi (strain ATCC 700808 / DSM 15171 / DSS-3)</name>
    <name type="common">Silicibacter pomeroyi</name>
    <dbReference type="NCBI Taxonomy" id="246200"/>
    <lineage>
        <taxon>Bacteria</taxon>
        <taxon>Pseudomonadati</taxon>
        <taxon>Pseudomonadota</taxon>
        <taxon>Alphaproteobacteria</taxon>
        <taxon>Rhodobacterales</taxon>
        <taxon>Roseobacteraceae</taxon>
        <taxon>Ruegeria</taxon>
    </lineage>
</organism>
<dbReference type="EC" id="2.1.1.170" evidence="1"/>
<dbReference type="EMBL" id="CP000031">
    <property type="protein sequence ID" value="AAV93333.1"/>
    <property type="molecule type" value="Genomic_DNA"/>
</dbReference>
<dbReference type="RefSeq" id="WP_011045774.1">
    <property type="nucleotide sequence ID" value="NC_003911.12"/>
</dbReference>
<dbReference type="SMR" id="Q5LWF2"/>
<dbReference type="STRING" id="246200.SPO0002"/>
<dbReference type="PaxDb" id="246200-SPO0002"/>
<dbReference type="KEGG" id="sil:SPO0002"/>
<dbReference type="eggNOG" id="COG0357">
    <property type="taxonomic scope" value="Bacteria"/>
</dbReference>
<dbReference type="HOGENOM" id="CLU_065341_1_1_5"/>
<dbReference type="OrthoDB" id="9808773at2"/>
<dbReference type="Proteomes" id="UP000001023">
    <property type="component" value="Chromosome"/>
</dbReference>
<dbReference type="GO" id="GO:0005829">
    <property type="term" value="C:cytosol"/>
    <property type="evidence" value="ECO:0007669"/>
    <property type="project" value="TreeGrafter"/>
</dbReference>
<dbReference type="GO" id="GO:0070043">
    <property type="term" value="F:rRNA (guanine-N7-)-methyltransferase activity"/>
    <property type="evidence" value="ECO:0007669"/>
    <property type="project" value="UniProtKB-UniRule"/>
</dbReference>
<dbReference type="Gene3D" id="3.40.50.150">
    <property type="entry name" value="Vaccinia Virus protein VP39"/>
    <property type="match status" value="1"/>
</dbReference>
<dbReference type="HAMAP" id="MF_00074">
    <property type="entry name" value="16SrRNA_methyltr_G"/>
    <property type="match status" value="1"/>
</dbReference>
<dbReference type="InterPro" id="IPR003682">
    <property type="entry name" value="rRNA_ssu_MeTfrase_G"/>
</dbReference>
<dbReference type="InterPro" id="IPR029063">
    <property type="entry name" value="SAM-dependent_MTases_sf"/>
</dbReference>
<dbReference type="NCBIfam" id="TIGR00138">
    <property type="entry name" value="rsmG_gidB"/>
    <property type="match status" value="1"/>
</dbReference>
<dbReference type="PANTHER" id="PTHR31760">
    <property type="entry name" value="S-ADENOSYL-L-METHIONINE-DEPENDENT METHYLTRANSFERASES SUPERFAMILY PROTEIN"/>
    <property type="match status" value="1"/>
</dbReference>
<dbReference type="PANTHER" id="PTHR31760:SF0">
    <property type="entry name" value="S-ADENOSYL-L-METHIONINE-DEPENDENT METHYLTRANSFERASES SUPERFAMILY PROTEIN"/>
    <property type="match status" value="1"/>
</dbReference>
<dbReference type="Pfam" id="PF02527">
    <property type="entry name" value="GidB"/>
    <property type="match status" value="1"/>
</dbReference>
<dbReference type="PIRSF" id="PIRSF003078">
    <property type="entry name" value="GidB"/>
    <property type="match status" value="1"/>
</dbReference>
<dbReference type="SUPFAM" id="SSF53335">
    <property type="entry name" value="S-adenosyl-L-methionine-dependent methyltransferases"/>
    <property type="match status" value="1"/>
</dbReference>
<keyword id="KW-0963">Cytoplasm</keyword>
<keyword id="KW-0489">Methyltransferase</keyword>
<keyword id="KW-1185">Reference proteome</keyword>
<keyword id="KW-0698">rRNA processing</keyword>
<keyword id="KW-0949">S-adenosyl-L-methionine</keyword>
<keyword id="KW-0808">Transferase</keyword>